<organism>
    <name type="scientific">Aeromonas hydrophila subsp. hydrophila (strain ATCC 7966 / DSM 30187 / BCRC 13018 / CCUG 14551 / JCM 1027 / KCTC 2358 / NCIMB 9240 / NCTC 8049)</name>
    <dbReference type="NCBI Taxonomy" id="380703"/>
    <lineage>
        <taxon>Bacteria</taxon>
        <taxon>Pseudomonadati</taxon>
        <taxon>Pseudomonadota</taxon>
        <taxon>Gammaproteobacteria</taxon>
        <taxon>Aeromonadales</taxon>
        <taxon>Aeromonadaceae</taxon>
        <taxon>Aeromonas</taxon>
    </lineage>
</organism>
<feature type="chain" id="PRO_1000054420" description="Large ribosomal subunit protein uL15">
    <location>
        <begin position="1"/>
        <end position="145"/>
    </location>
</feature>
<feature type="region of interest" description="Disordered" evidence="2">
    <location>
        <begin position="1"/>
        <end position="52"/>
    </location>
</feature>
<feature type="compositionally biased region" description="Gly residues" evidence="2">
    <location>
        <begin position="21"/>
        <end position="35"/>
    </location>
</feature>
<feature type="compositionally biased region" description="Gly residues" evidence="2">
    <location>
        <begin position="42"/>
        <end position="52"/>
    </location>
</feature>
<gene>
    <name evidence="1" type="primary">rplO</name>
    <name type="ordered locus">AHA_0328</name>
</gene>
<reference key="1">
    <citation type="journal article" date="2006" name="J. Bacteriol.">
        <title>Genome sequence of Aeromonas hydrophila ATCC 7966T: jack of all trades.</title>
        <authorList>
            <person name="Seshadri R."/>
            <person name="Joseph S.W."/>
            <person name="Chopra A.K."/>
            <person name="Sha J."/>
            <person name="Shaw J."/>
            <person name="Graf J."/>
            <person name="Haft D.H."/>
            <person name="Wu M."/>
            <person name="Ren Q."/>
            <person name="Rosovitz M.J."/>
            <person name="Madupu R."/>
            <person name="Tallon L."/>
            <person name="Kim M."/>
            <person name="Jin S."/>
            <person name="Vuong H."/>
            <person name="Stine O.C."/>
            <person name="Ali A."/>
            <person name="Horneman A.J."/>
            <person name="Heidelberg J.F."/>
        </authorList>
    </citation>
    <scope>NUCLEOTIDE SEQUENCE [LARGE SCALE GENOMIC DNA]</scope>
    <source>
        <strain>ATCC 7966 / DSM 30187 / BCRC 13018 / CCUG 14551 / JCM 1027 / KCTC 2358 / NCIMB 9240 / NCTC 8049</strain>
    </source>
</reference>
<dbReference type="EMBL" id="CP000462">
    <property type="protein sequence ID" value="ABK35971.1"/>
    <property type="molecule type" value="Genomic_DNA"/>
</dbReference>
<dbReference type="RefSeq" id="WP_005307987.1">
    <property type="nucleotide sequence ID" value="NC_008570.1"/>
</dbReference>
<dbReference type="RefSeq" id="YP_854862.1">
    <property type="nucleotide sequence ID" value="NC_008570.1"/>
</dbReference>
<dbReference type="SMR" id="A0KF40"/>
<dbReference type="STRING" id="380703.AHA_0328"/>
<dbReference type="EnsemblBacteria" id="ABK35971">
    <property type="protein sequence ID" value="ABK35971"/>
    <property type="gene ID" value="AHA_0328"/>
</dbReference>
<dbReference type="GeneID" id="97858412"/>
<dbReference type="KEGG" id="aha:AHA_0328"/>
<dbReference type="PATRIC" id="fig|380703.7.peg.317"/>
<dbReference type="eggNOG" id="COG0200">
    <property type="taxonomic scope" value="Bacteria"/>
</dbReference>
<dbReference type="HOGENOM" id="CLU_055188_4_2_6"/>
<dbReference type="OrthoDB" id="9810293at2"/>
<dbReference type="PRO" id="PR:A0KF40"/>
<dbReference type="Proteomes" id="UP000000756">
    <property type="component" value="Chromosome"/>
</dbReference>
<dbReference type="GO" id="GO:0022625">
    <property type="term" value="C:cytosolic large ribosomal subunit"/>
    <property type="evidence" value="ECO:0007669"/>
    <property type="project" value="TreeGrafter"/>
</dbReference>
<dbReference type="GO" id="GO:0019843">
    <property type="term" value="F:rRNA binding"/>
    <property type="evidence" value="ECO:0007669"/>
    <property type="project" value="UniProtKB-UniRule"/>
</dbReference>
<dbReference type="GO" id="GO:0003735">
    <property type="term" value="F:structural constituent of ribosome"/>
    <property type="evidence" value="ECO:0007669"/>
    <property type="project" value="InterPro"/>
</dbReference>
<dbReference type="GO" id="GO:0006412">
    <property type="term" value="P:translation"/>
    <property type="evidence" value="ECO:0007669"/>
    <property type="project" value="UniProtKB-UniRule"/>
</dbReference>
<dbReference type="Gene3D" id="3.100.10.10">
    <property type="match status" value="1"/>
</dbReference>
<dbReference type="HAMAP" id="MF_01341">
    <property type="entry name" value="Ribosomal_uL15"/>
    <property type="match status" value="1"/>
</dbReference>
<dbReference type="InterPro" id="IPR030878">
    <property type="entry name" value="Ribosomal_uL15"/>
</dbReference>
<dbReference type="InterPro" id="IPR021131">
    <property type="entry name" value="Ribosomal_uL15/eL18"/>
</dbReference>
<dbReference type="InterPro" id="IPR036227">
    <property type="entry name" value="Ribosomal_uL15/eL18_sf"/>
</dbReference>
<dbReference type="InterPro" id="IPR005749">
    <property type="entry name" value="Ribosomal_uL15_bac-type"/>
</dbReference>
<dbReference type="InterPro" id="IPR001196">
    <property type="entry name" value="Ribosomal_uL15_CS"/>
</dbReference>
<dbReference type="NCBIfam" id="TIGR01071">
    <property type="entry name" value="rplO_bact"/>
    <property type="match status" value="1"/>
</dbReference>
<dbReference type="PANTHER" id="PTHR12934">
    <property type="entry name" value="50S RIBOSOMAL PROTEIN L15"/>
    <property type="match status" value="1"/>
</dbReference>
<dbReference type="PANTHER" id="PTHR12934:SF11">
    <property type="entry name" value="LARGE RIBOSOMAL SUBUNIT PROTEIN UL15M"/>
    <property type="match status" value="1"/>
</dbReference>
<dbReference type="Pfam" id="PF00828">
    <property type="entry name" value="Ribosomal_L27A"/>
    <property type="match status" value="1"/>
</dbReference>
<dbReference type="SUPFAM" id="SSF52080">
    <property type="entry name" value="Ribosomal proteins L15p and L18e"/>
    <property type="match status" value="1"/>
</dbReference>
<dbReference type="PROSITE" id="PS00475">
    <property type="entry name" value="RIBOSOMAL_L15"/>
    <property type="match status" value="1"/>
</dbReference>
<protein>
    <recommendedName>
        <fullName evidence="1">Large ribosomal subunit protein uL15</fullName>
    </recommendedName>
    <alternativeName>
        <fullName evidence="3">50S ribosomal protein L15</fullName>
    </alternativeName>
</protein>
<name>RL15_AERHH</name>
<evidence type="ECO:0000255" key="1">
    <source>
        <dbReference type="HAMAP-Rule" id="MF_01341"/>
    </source>
</evidence>
<evidence type="ECO:0000256" key="2">
    <source>
        <dbReference type="SAM" id="MobiDB-lite"/>
    </source>
</evidence>
<evidence type="ECO:0000305" key="3"/>
<accession>A0KF40</accession>
<comment type="function">
    <text evidence="1">Binds to the 23S rRNA.</text>
</comment>
<comment type="subunit">
    <text evidence="1">Part of the 50S ribosomal subunit.</text>
</comment>
<comment type="similarity">
    <text evidence="1">Belongs to the universal ribosomal protein uL15 family.</text>
</comment>
<proteinExistence type="inferred from homology"/>
<keyword id="KW-1185">Reference proteome</keyword>
<keyword id="KW-0687">Ribonucleoprotein</keyword>
<keyword id="KW-0689">Ribosomal protein</keyword>
<keyword id="KW-0694">RNA-binding</keyword>
<keyword id="KW-0699">rRNA-binding</keyword>
<sequence length="145" mass="15067">MRLNTLSPAAGSKRVKHRPGRGIGSGLGKTGGRGVKGQTSRSGGGKVRNGFEGGQMPLKIRLPKFGFFSRKSLVSAEVRLNEIALVEGDVVDVSTLKQAGVITKNIVFAKVVLSGNIDRAVTVRGLSVTKGARAAIEAAGGKIEE</sequence>